<feature type="signal peptide" evidence="1">
    <location>
        <begin position="1"/>
        <end position="17"/>
    </location>
</feature>
<feature type="chain" id="PRO_5003607112" description="Secreted RxLR effector protein 18">
    <location>
        <begin position="18"/>
        <end position="106"/>
    </location>
</feature>
<feature type="short sequence motif" description="RxLR-dEER" evidence="7">
    <location>
        <begin position="28"/>
        <end position="39"/>
    </location>
</feature>
<comment type="function">
    <text evidence="7">Effector that may act as a suppressor of cell death to interrupt plant immunity. I.</text>
</comment>
<comment type="subcellular location">
    <subcellularLocation>
        <location evidence="2">Secreted</location>
    </subcellularLocation>
    <subcellularLocation>
        <location evidence="2">Host cell</location>
    </subcellularLocation>
</comment>
<comment type="induction">
    <text evidence="2 3 4">Expression is up-regulated at the earlier infection stages.</text>
</comment>
<comment type="domain">
    <text evidence="7">The RxLR-dEER motif acts to carry the protein into the host cell cytoplasm through binding to cell surface phosphatidylinositol-3-phosphate.</text>
</comment>
<comment type="similarity">
    <text evidence="6">Belongs to the RxLR effector family.</text>
</comment>
<dbReference type="EMBL" id="HE582030">
    <property type="protein sequence ID" value="CCD28104.1"/>
    <property type="molecule type" value="mRNA"/>
</dbReference>
<dbReference type="GO" id="GO:0005576">
    <property type="term" value="C:extracellular region"/>
    <property type="evidence" value="ECO:0007669"/>
    <property type="project" value="UniProtKB-SubCell"/>
</dbReference>
<dbReference type="GO" id="GO:0043657">
    <property type="term" value="C:host cell"/>
    <property type="evidence" value="ECO:0007669"/>
    <property type="project" value="UniProtKB-SubCell"/>
</dbReference>
<sequence length="106" mass="11097">MRGSTAMLLAAIALFSSQSFATAIGKSRTLRSFEELEERQLASGSGSNNGLDDVKRSALVELLGEKVVAGGPTSILKAMMKLSDEELQNFIDKNIGSDSDSASGGN</sequence>
<evidence type="ECO:0000255" key="1"/>
<evidence type="ECO:0000269" key="2">
    <source>
    </source>
</evidence>
<evidence type="ECO:0000269" key="3">
    <source>
    </source>
</evidence>
<evidence type="ECO:0000269" key="4">
    <source ref="3"/>
</evidence>
<evidence type="ECO:0000303" key="5">
    <source>
    </source>
</evidence>
<evidence type="ECO:0000305" key="6"/>
<evidence type="ECO:0000305" key="7">
    <source ref="3"/>
</evidence>
<organism>
    <name type="scientific">Plasmopara viticola</name>
    <name type="common">Downy mildew of grapevine</name>
    <name type="synonym">Botrytis viticola</name>
    <dbReference type="NCBI Taxonomy" id="143451"/>
    <lineage>
        <taxon>Eukaryota</taxon>
        <taxon>Sar</taxon>
        <taxon>Stramenopiles</taxon>
        <taxon>Oomycota</taxon>
        <taxon>Peronosporales</taxon>
        <taxon>Peronosporaceae</taxon>
        <taxon>Plasmopara</taxon>
    </lineage>
</organism>
<name>RLR18_PLAVT</name>
<keyword id="KW-0964">Secreted</keyword>
<keyword id="KW-0732">Signal</keyword>
<keyword id="KW-0843">Virulence</keyword>
<protein>
    <recommendedName>
        <fullName evidence="5">Secreted RxLR effector protein 18</fullName>
    </recommendedName>
</protein>
<proteinExistence type="evidence at transcript level"/>
<accession>H6S3X4</accession>
<reference key="1">
    <citation type="journal article" date="2018" name="Front. Plant Sci.">
        <title>In planta functional analysis and subcellular localization of the oomycete pathogen Plasmopara viticola candidate RXLR effector repertoire.</title>
        <authorList>
            <person name="Liu Y."/>
            <person name="Lan X."/>
            <person name="Song S."/>
            <person name="Yin L."/>
            <person name="Dry I.B."/>
            <person name="Qu J."/>
            <person name="Xiang J."/>
            <person name="Lu J."/>
        </authorList>
    </citation>
    <scope>NUCLEOTIDE SEQUENCE [MRNA]</scope>
</reference>
<reference key="2">
    <citation type="journal article" date="2012" name="Fungal Biol.">
        <title>Identification of effector genes from the phytopathogenic Oomycete Plasmopara viticola through the analysis of gene expression in germinated zoospores.</title>
        <authorList>
            <person name="Mestre P."/>
            <person name="Piron M.C."/>
            <person name="Merdinoglu D."/>
        </authorList>
    </citation>
    <scope>NUCLEOTIDE SEQUENCE [MRNA] OF 7-106</scope>
    <scope>INDUCTION</scope>
    <scope>SUBCELLULAR LOCATION</scope>
    <source>
        <strain>SC</strain>
    </source>
</reference>
<reference key="3">
    <citation type="journal article" date="2015" name="Physiol. Mol. Plant Pathol.">
        <title>Characterization of the secretome of Plasmopara viticola by de novo transcriptome analysis.</title>
        <authorList>
            <person name="Yin L."/>
            <person name="Li X."/>
            <person name="Xiang J."/>
            <person name="Qu J."/>
            <person name="Zhang Y."/>
            <person name="Dry I.B."/>
            <person name="Lu J."/>
        </authorList>
    </citation>
    <scope>IDENTIFICATION</scope>
    <scope>FUNCTION</scope>
    <scope>INDUCTION</scope>
    <scope>DOMAIN</scope>
</reference>
<reference key="4">
    <citation type="journal article" date="2018" name="Fungal Biol.">
        <title>Up-regulated RxLR effector genes of Plasmopara viticola in synchronized host-free stages and infected leaves of hosts with different susceptibility.</title>
        <authorList>
            <person name="Gomez-Zeledon J."/>
            <person name="Spring O."/>
        </authorList>
    </citation>
    <scope>INDUCTION</scope>
</reference>